<name>SSH1_YEAST</name>
<accession>P38353</accession>
<accession>D6VQS8</accession>
<gene>
    <name type="primary">SSH1</name>
    <name type="ordered locus">YBR283C</name>
    <name type="ORF">YBR2020</name>
</gene>
<evidence type="ECO:0000255" key="1"/>
<evidence type="ECO:0000269" key="2">
    <source>
    </source>
</evidence>
<evidence type="ECO:0000269" key="3">
    <source>
    </source>
</evidence>
<evidence type="ECO:0000305" key="4"/>
<reference key="1">
    <citation type="journal article" date="1996" name="EMBO J.">
        <title>A second trimeric complex containing homologs of the Sec61p complex functions in protein transport across the ER membrane of S. cerevisiae.</title>
        <authorList>
            <person name="Finke K."/>
            <person name="Plath K."/>
            <person name="Panzner S."/>
            <person name="Prehn S."/>
            <person name="Rapoport T.A."/>
            <person name="Hartmann E."/>
            <person name="Sommer T."/>
        </authorList>
    </citation>
    <scope>NUCLEOTIDE SEQUENCE [GENOMIC DNA]</scope>
</reference>
<reference key="2">
    <citation type="journal article" date="1994" name="Yeast">
        <title>The sequence of a 32,420 bp segment located on the right arm of chromosome II from Saccharomyces cerevisiae.</title>
        <authorList>
            <person name="Holmstroem K."/>
            <person name="Brandt T."/>
            <person name="Kallesoe T."/>
        </authorList>
    </citation>
    <scope>NUCLEOTIDE SEQUENCE [GENOMIC DNA]</scope>
    <source>
        <strain>ATCC 204508 / S288c</strain>
    </source>
</reference>
<reference key="3">
    <citation type="journal article" date="1994" name="EMBO J.">
        <title>Complete DNA sequence of yeast chromosome II.</title>
        <authorList>
            <person name="Feldmann H."/>
            <person name="Aigle M."/>
            <person name="Aljinovic G."/>
            <person name="Andre B."/>
            <person name="Baclet M.C."/>
            <person name="Barthe C."/>
            <person name="Baur A."/>
            <person name="Becam A.-M."/>
            <person name="Biteau N."/>
            <person name="Boles E."/>
            <person name="Brandt T."/>
            <person name="Brendel M."/>
            <person name="Brueckner M."/>
            <person name="Bussereau F."/>
            <person name="Christiansen C."/>
            <person name="Contreras R."/>
            <person name="Crouzet M."/>
            <person name="Cziepluch C."/>
            <person name="Demolis N."/>
            <person name="Delaveau T."/>
            <person name="Doignon F."/>
            <person name="Domdey H."/>
            <person name="Duesterhus S."/>
            <person name="Dubois E."/>
            <person name="Dujon B."/>
            <person name="El Bakkoury M."/>
            <person name="Entian K.-D."/>
            <person name="Feuermann M."/>
            <person name="Fiers W."/>
            <person name="Fobo G.M."/>
            <person name="Fritz C."/>
            <person name="Gassenhuber J."/>
            <person name="Glansdorff N."/>
            <person name="Goffeau A."/>
            <person name="Grivell L.A."/>
            <person name="de Haan M."/>
            <person name="Hein C."/>
            <person name="Herbert C.J."/>
            <person name="Hollenberg C.P."/>
            <person name="Holmstroem K."/>
            <person name="Jacq C."/>
            <person name="Jacquet M."/>
            <person name="Jauniaux J.-C."/>
            <person name="Jonniaux J.-L."/>
            <person name="Kallesoee T."/>
            <person name="Kiesau P."/>
            <person name="Kirchrath L."/>
            <person name="Koetter P."/>
            <person name="Korol S."/>
            <person name="Liebl S."/>
            <person name="Logghe M."/>
            <person name="Lohan A.J.E."/>
            <person name="Louis E.J."/>
            <person name="Li Z.Y."/>
            <person name="Maat M.J."/>
            <person name="Mallet L."/>
            <person name="Mannhaupt G."/>
            <person name="Messenguy F."/>
            <person name="Miosga T."/>
            <person name="Molemans F."/>
            <person name="Mueller S."/>
            <person name="Nasr F."/>
            <person name="Obermaier B."/>
            <person name="Perea J."/>
            <person name="Pierard A."/>
            <person name="Piravandi E."/>
            <person name="Pohl F.M."/>
            <person name="Pohl T.M."/>
            <person name="Potier S."/>
            <person name="Proft M."/>
            <person name="Purnelle B."/>
            <person name="Ramezani Rad M."/>
            <person name="Rieger M."/>
            <person name="Rose M."/>
            <person name="Schaaff-Gerstenschlaeger I."/>
            <person name="Scherens B."/>
            <person name="Schwarzlose C."/>
            <person name="Skala J."/>
            <person name="Slonimski P.P."/>
            <person name="Smits P.H.M."/>
            <person name="Souciet J.-L."/>
            <person name="Steensma H.Y."/>
            <person name="Stucka R."/>
            <person name="Urrestarazu L.A."/>
            <person name="van der Aart Q.J.M."/>
            <person name="Van Dyck L."/>
            <person name="Vassarotti A."/>
            <person name="Vetter I."/>
            <person name="Vierendeels F."/>
            <person name="Vissers S."/>
            <person name="Wagner G."/>
            <person name="de Wergifosse P."/>
            <person name="Wolfe K.H."/>
            <person name="Zagulski M."/>
            <person name="Zimmermann F.K."/>
            <person name="Mewes H.-W."/>
            <person name="Kleine K."/>
        </authorList>
    </citation>
    <scope>NUCLEOTIDE SEQUENCE [LARGE SCALE GENOMIC DNA]</scope>
    <source>
        <strain>ATCC 204508 / S288c</strain>
    </source>
</reference>
<reference key="4">
    <citation type="journal article" date="2014" name="G3 (Bethesda)">
        <title>The reference genome sequence of Saccharomyces cerevisiae: Then and now.</title>
        <authorList>
            <person name="Engel S.R."/>
            <person name="Dietrich F.S."/>
            <person name="Fisk D.G."/>
            <person name="Binkley G."/>
            <person name="Balakrishnan R."/>
            <person name="Costanzo M.C."/>
            <person name="Dwight S.S."/>
            <person name="Hitz B.C."/>
            <person name="Karra K."/>
            <person name="Nash R.S."/>
            <person name="Weng S."/>
            <person name="Wong E.D."/>
            <person name="Lloyd P."/>
            <person name="Skrzypek M.S."/>
            <person name="Miyasato S.R."/>
            <person name="Simison M."/>
            <person name="Cherry J.M."/>
        </authorList>
    </citation>
    <scope>GENOME REANNOTATION</scope>
    <source>
        <strain>ATCC 204508 / S288c</strain>
    </source>
</reference>
<reference key="5">
    <citation type="journal article" date="2007" name="Genome Res.">
        <title>Approaching a complete repository of sequence-verified protein-encoding clones for Saccharomyces cerevisiae.</title>
        <authorList>
            <person name="Hu Y."/>
            <person name="Rolfs A."/>
            <person name="Bhullar B."/>
            <person name="Murthy T.V.S."/>
            <person name="Zhu C."/>
            <person name="Berger M.F."/>
            <person name="Camargo A.A."/>
            <person name="Kelley F."/>
            <person name="McCarron S."/>
            <person name="Jepson D."/>
            <person name="Richardson A."/>
            <person name="Raphael J."/>
            <person name="Moreira D."/>
            <person name="Taycher E."/>
            <person name="Zuo D."/>
            <person name="Mohr S."/>
            <person name="Kane M.F."/>
            <person name="Williamson J."/>
            <person name="Simpson A.J.G."/>
            <person name="Bulyk M.L."/>
            <person name="Harlow E."/>
            <person name="Marsischky G."/>
            <person name="Kolodner R.D."/>
            <person name="LaBaer J."/>
        </authorList>
    </citation>
    <scope>NUCLEOTIDE SEQUENCE [GENOMIC DNA]</scope>
    <source>
        <strain>ATCC 204508 / S288c</strain>
    </source>
</reference>
<reference key="6">
    <citation type="journal article" date="1991" name="Biochimie">
        <title>The nuclear coded mitoribosomal proteins YmL27 and YmL31 are both essential for mitochondrial function in yeast.</title>
        <authorList>
            <person name="Graack H.-R."/>
            <person name="Grohmann L."/>
            <person name="Kitakawa M."/>
        </authorList>
    </citation>
    <scope>NUCLEOTIDE SEQUENCE [GENOMIC DNA] OF 399-490</scope>
</reference>
<reference key="7">
    <citation type="journal article" date="2001" name="Dev. Cell">
        <title>Ssh1p determines the translocation and dislocation capacities of the yeast endoplasmic reticulum.</title>
        <authorList>
            <person name="Wilkinson B.M."/>
            <person name="Tyson J.R."/>
            <person name="Stirling C.J."/>
        </authorList>
    </citation>
    <scope>FUNCTION</scope>
</reference>
<reference key="8">
    <citation type="journal article" date="2000" name="EMBO J.">
        <title>Evolutionarily conserved binding of ribosomes to the translocation channel via the large ribosomal RNA.</title>
        <authorList>
            <person name="Prinz A."/>
            <person name="Behrens C."/>
            <person name="Rapoport T.A."/>
            <person name="Hartmann E."/>
            <person name="Kalies K.-U."/>
        </authorList>
    </citation>
    <scope>ASSOCIATION OF THE SSH1 COMPLEX WITH RIBOSOMES</scope>
</reference>
<reference key="9">
    <citation type="journal article" date="2003" name="Nature">
        <title>Global analysis of protein expression in yeast.</title>
        <authorList>
            <person name="Ghaemmaghami S."/>
            <person name="Huh W.-K."/>
            <person name="Bower K."/>
            <person name="Howson R.W."/>
            <person name="Belle A."/>
            <person name="Dephoure N."/>
            <person name="O'Shea E.K."/>
            <person name="Weissman J.S."/>
        </authorList>
    </citation>
    <scope>LEVEL OF PROTEIN EXPRESSION [LARGE SCALE ANALYSIS]</scope>
</reference>
<reference key="10">
    <citation type="journal article" date="2006" name="Proc. Natl. Acad. Sci. U.S.A.">
        <title>A global topology map of the Saccharomyces cerevisiae membrane proteome.</title>
        <authorList>
            <person name="Kim H."/>
            <person name="Melen K."/>
            <person name="Oesterberg M."/>
            <person name="von Heijne G."/>
        </authorList>
    </citation>
    <scope>TOPOLOGY [LARGE SCALE ANALYSIS]</scope>
    <source>
        <strain>ATCC 208353 / W303-1A</strain>
    </source>
</reference>
<sequence length="490" mass="53312">MSGFRLIDIVKPILPILPEVELPFEKLPFDDKIVYTIFAGLIYLFAQFPLVGLPKATTPNVNDPIYFLRGVFGCEPRTLLEFGLFPNISSGLILQLLAGLKVIKVNFKIQSDRELFQSLTKVFAIVQYVILTNIFIFAGYFGDDLSVVQIGLINFQLVGAGIFTTLLAEVIDKGFGFSSGAMIINTVVIATNLVADTFGVSQIKVGEDDQTEAQGALINLIQGLRSKHKTFIGGIISAFNRDYLPNLTTTIIVLAIAIIVCYLQSVRVELPIRSTRARGTNNVYPIKLLYTGCLSVLFSYTILFYIHIFAFVLIQLVAKNEPTHIICKIMGHYENANNLLAVPTFPLSLLAPPTSFFKGVTQQPLTFITYSAFILVTGIWFADKWQAISGSSARDVALEFKDQGITLMGRREQNVAKELNKVIPIAAVTGASVLSLITVIGESLGLKGKAAGIVVGIAGGFSLLEVITIEYQQSGGQSALNQVLGVPGAM</sequence>
<proteinExistence type="evidence at protein level"/>
<keyword id="KW-0002">3D-structure</keyword>
<keyword id="KW-0256">Endoplasmic reticulum</keyword>
<keyword id="KW-0472">Membrane</keyword>
<keyword id="KW-0653">Protein transport</keyword>
<keyword id="KW-1185">Reference proteome</keyword>
<keyword id="KW-0811">Translocation</keyword>
<keyword id="KW-0812">Transmembrane</keyword>
<keyword id="KW-1133">Transmembrane helix</keyword>
<keyword id="KW-0813">Transport</keyword>
<organism>
    <name type="scientific">Saccharomyces cerevisiae (strain ATCC 204508 / S288c)</name>
    <name type="common">Baker's yeast</name>
    <dbReference type="NCBI Taxonomy" id="559292"/>
    <lineage>
        <taxon>Eukaryota</taxon>
        <taxon>Fungi</taxon>
        <taxon>Dikarya</taxon>
        <taxon>Ascomycota</taxon>
        <taxon>Saccharomycotina</taxon>
        <taxon>Saccharomycetes</taxon>
        <taxon>Saccharomycetales</taxon>
        <taxon>Saccharomycetaceae</taxon>
        <taxon>Saccharomyces</taxon>
    </lineage>
</organism>
<dbReference type="EMBL" id="U05336">
    <property type="protein sequence ID" value="AAB40986.1"/>
    <property type="molecule type" value="Genomic_DNA"/>
</dbReference>
<dbReference type="EMBL" id="X76053">
    <property type="protein sequence ID" value="CAA53646.1"/>
    <property type="molecule type" value="Genomic_DNA"/>
</dbReference>
<dbReference type="EMBL" id="Z36152">
    <property type="protein sequence ID" value="CAA85247.1"/>
    <property type="molecule type" value="Genomic_DNA"/>
</dbReference>
<dbReference type="EMBL" id="AY692997">
    <property type="protein sequence ID" value="AAT93016.1"/>
    <property type="molecule type" value="Genomic_DNA"/>
</dbReference>
<dbReference type="EMBL" id="S77888">
    <property type="protein sequence ID" value="AAB21097.2"/>
    <property type="status" value="ALT_SEQ"/>
    <property type="molecule type" value="Genomic_DNA"/>
</dbReference>
<dbReference type="EMBL" id="BK006936">
    <property type="protein sequence ID" value="DAA07398.1"/>
    <property type="molecule type" value="Genomic_DNA"/>
</dbReference>
<dbReference type="PIR" id="S44545">
    <property type="entry name" value="S44545"/>
</dbReference>
<dbReference type="RefSeq" id="NP_009842.1">
    <property type="nucleotide sequence ID" value="NM_001178631.1"/>
</dbReference>
<dbReference type="PDB" id="2WW9">
    <property type="method" value="EM"/>
    <property type="resolution" value="8.60 A"/>
    <property type="chains" value="A=1-490"/>
</dbReference>
<dbReference type="PDB" id="2WWA">
    <property type="method" value="EM"/>
    <property type="resolution" value="8.90 A"/>
    <property type="chains" value="A=1-490"/>
</dbReference>
<dbReference type="PDBsum" id="2WW9"/>
<dbReference type="PDBsum" id="2WWA"/>
<dbReference type="SMR" id="P38353"/>
<dbReference type="BioGRID" id="32977">
    <property type="interactions" value="405"/>
</dbReference>
<dbReference type="ComplexPortal" id="CPX-1834">
    <property type="entry name" value="SSH1 translocon complex"/>
</dbReference>
<dbReference type="DIP" id="DIP-4962N"/>
<dbReference type="FunCoup" id="P38353">
    <property type="interactions" value="233"/>
</dbReference>
<dbReference type="IntAct" id="P38353">
    <property type="interactions" value="48"/>
</dbReference>
<dbReference type="MINT" id="P38353"/>
<dbReference type="STRING" id="4932.YBR283C"/>
<dbReference type="iPTMnet" id="P38353"/>
<dbReference type="PaxDb" id="4932-YBR283C"/>
<dbReference type="PeptideAtlas" id="P38353"/>
<dbReference type="EnsemblFungi" id="YBR283C_mRNA">
    <property type="protein sequence ID" value="YBR283C"/>
    <property type="gene ID" value="YBR283C"/>
</dbReference>
<dbReference type="GeneID" id="852586"/>
<dbReference type="KEGG" id="sce:YBR283C"/>
<dbReference type="AGR" id="SGD:S000000487"/>
<dbReference type="SGD" id="S000000487">
    <property type="gene designation" value="SSH1"/>
</dbReference>
<dbReference type="VEuPathDB" id="FungiDB:YBR283C"/>
<dbReference type="eggNOG" id="KOG1373">
    <property type="taxonomic scope" value="Eukaryota"/>
</dbReference>
<dbReference type="GeneTree" id="ENSGT00390000003721"/>
<dbReference type="HOGENOM" id="CLU_031763_2_1_1"/>
<dbReference type="InParanoid" id="P38353"/>
<dbReference type="OMA" id="QAYCHIK"/>
<dbReference type="OrthoDB" id="420669at2759"/>
<dbReference type="BioCyc" id="YEAST:G3O-29203-MONOMER"/>
<dbReference type="BioGRID-ORCS" id="852586">
    <property type="hits" value="0 hits in 10 CRISPR screens"/>
</dbReference>
<dbReference type="EvolutionaryTrace" id="P38353"/>
<dbReference type="PRO" id="PR:P38353"/>
<dbReference type="Proteomes" id="UP000002311">
    <property type="component" value="Chromosome II"/>
</dbReference>
<dbReference type="RNAct" id="P38353">
    <property type="molecule type" value="protein"/>
</dbReference>
<dbReference type="GO" id="GO:0005783">
    <property type="term" value="C:endoplasmic reticulum"/>
    <property type="evidence" value="ECO:0007005"/>
    <property type="project" value="SGD"/>
</dbReference>
<dbReference type="GO" id="GO:0005789">
    <property type="term" value="C:endoplasmic reticulum membrane"/>
    <property type="evidence" value="ECO:0000303"/>
    <property type="project" value="ComplexPortal"/>
</dbReference>
<dbReference type="GO" id="GO:0005784">
    <property type="term" value="C:Sec61 translocon complex"/>
    <property type="evidence" value="ECO:0000318"/>
    <property type="project" value="GO_Central"/>
</dbReference>
<dbReference type="GO" id="GO:0071261">
    <property type="term" value="C:Ssh1 translocon complex"/>
    <property type="evidence" value="ECO:0000314"/>
    <property type="project" value="SGD"/>
</dbReference>
<dbReference type="GO" id="GO:0008320">
    <property type="term" value="F:protein transmembrane transporter activity"/>
    <property type="evidence" value="ECO:0000318"/>
    <property type="project" value="GO_Central"/>
</dbReference>
<dbReference type="GO" id="GO:0043022">
    <property type="term" value="F:ribosome binding"/>
    <property type="evidence" value="ECO:0000318"/>
    <property type="project" value="GO_Central"/>
</dbReference>
<dbReference type="GO" id="GO:0005048">
    <property type="term" value="F:signal sequence binding"/>
    <property type="evidence" value="ECO:0000314"/>
    <property type="project" value="SGD"/>
</dbReference>
<dbReference type="GO" id="GO:0031204">
    <property type="term" value="P:post-translational protein targeting to membrane, translocation"/>
    <property type="evidence" value="ECO:0000318"/>
    <property type="project" value="GO_Central"/>
</dbReference>
<dbReference type="GO" id="GO:0006614">
    <property type="term" value="P:SRP-dependent cotranslational protein targeting to membrane"/>
    <property type="evidence" value="ECO:0000315"/>
    <property type="project" value="SGD"/>
</dbReference>
<dbReference type="GO" id="GO:0006616">
    <property type="term" value="P:SRP-dependent cotranslational protein targeting to membrane, translocation"/>
    <property type="evidence" value="ECO:0000318"/>
    <property type="project" value="GO_Central"/>
</dbReference>
<dbReference type="FunFam" id="1.10.3370.10:FF:000012">
    <property type="entry name" value="Ssh1p"/>
    <property type="match status" value="1"/>
</dbReference>
<dbReference type="Gene3D" id="1.10.3370.10">
    <property type="entry name" value="SecY subunit domain"/>
    <property type="match status" value="1"/>
</dbReference>
<dbReference type="InterPro" id="IPR002208">
    <property type="entry name" value="SecY/SEC61-alpha"/>
</dbReference>
<dbReference type="InterPro" id="IPR030659">
    <property type="entry name" value="SecY_CS"/>
</dbReference>
<dbReference type="InterPro" id="IPR023201">
    <property type="entry name" value="SecY_dom_sf"/>
</dbReference>
<dbReference type="InterPro" id="IPR019561">
    <property type="entry name" value="Translocon_Sec61/SecY_plug_dom"/>
</dbReference>
<dbReference type="PANTHER" id="PTHR10906">
    <property type="entry name" value="SECY/SEC61-ALPHA FAMILY MEMBER"/>
    <property type="match status" value="1"/>
</dbReference>
<dbReference type="Pfam" id="PF10559">
    <property type="entry name" value="Plug_translocon"/>
    <property type="match status" value="1"/>
</dbReference>
<dbReference type="Pfam" id="PF00344">
    <property type="entry name" value="SecY"/>
    <property type="match status" value="1"/>
</dbReference>
<dbReference type="PIRSF" id="PIRSF004557">
    <property type="entry name" value="SecY"/>
    <property type="match status" value="1"/>
</dbReference>
<dbReference type="SUPFAM" id="SSF103491">
    <property type="entry name" value="Preprotein translocase SecY subunit"/>
    <property type="match status" value="1"/>
</dbReference>
<dbReference type="PROSITE" id="PS00755">
    <property type="entry name" value="SECY_1"/>
    <property type="match status" value="1"/>
</dbReference>
<protein>
    <recommendedName>
        <fullName>Sec sixty-one protein homolog</fullName>
    </recommendedName>
    <alternativeName>
        <fullName>Ssh1 complex subunit SSH1</fullName>
    </alternativeName>
    <alternativeName>
        <fullName>Ssh1 complex subunit alpha</fullName>
    </alternativeName>
</protein>
<feature type="chain" id="PRO_0000131811" description="Sec sixty-one protein homolog">
    <location>
        <begin position="1"/>
        <end position="490"/>
    </location>
</feature>
<feature type="topological domain" description="Cytoplasmic" evidence="1">
    <location>
        <begin position="1"/>
        <end position="32"/>
    </location>
</feature>
<feature type="transmembrane region" description="Helical" evidence="1">
    <location>
        <begin position="33"/>
        <end position="53"/>
    </location>
</feature>
<feature type="topological domain" description="Lumenal" evidence="1">
    <location>
        <begin position="54"/>
        <end position="121"/>
    </location>
</feature>
<feature type="transmembrane region" description="Helical" evidence="1">
    <location>
        <begin position="122"/>
        <end position="142"/>
    </location>
</feature>
<feature type="topological domain" description="Cytoplasmic" evidence="1">
    <location>
        <begin position="143"/>
        <end position="146"/>
    </location>
</feature>
<feature type="transmembrane region" description="Helical" evidence="1">
    <location>
        <begin position="147"/>
        <end position="167"/>
    </location>
</feature>
<feature type="topological domain" description="Lumenal" evidence="1">
    <location>
        <begin position="168"/>
        <end position="174"/>
    </location>
</feature>
<feature type="transmembrane region" description="Helical" evidence="1">
    <location>
        <begin position="175"/>
        <end position="195"/>
    </location>
</feature>
<feature type="topological domain" description="Cytoplasmic" evidence="1">
    <location>
        <begin position="196"/>
        <end position="242"/>
    </location>
</feature>
<feature type="transmembrane region" description="Helical" evidence="1">
    <location>
        <begin position="243"/>
        <end position="263"/>
    </location>
</feature>
<feature type="topological domain" description="Lumenal" evidence="1">
    <location>
        <begin position="264"/>
        <end position="293"/>
    </location>
</feature>
<feature type="transmembrane region" description="Helical" evidence="1">
    <location>
        <begin position="294"/>
        <end position="314"/>
    </location>
</feature>
<feature type="topological domain" description="Cytoplasmic" evidence="1">
    <location>
        <begin position="315"/>
        <end position="339"/>
    </location>
</feature>
<feature type="transmembrane region" description="Helical" evidence="1">
    <location>
        <begin position="340"/>
        <end position="360"/>
    </location>
</feature>
<feature type="topological domain" description="Lumenal" evidence="1">
    <location>
        <position position="361"/>
    </location>
</feature>
<feature type="transmembrane region" description="Helical" evidence="1">
    <location>
        <begin position="362"/>
        <end position="382"/>
    </location>
</feature>
<feature type="topological domain" description="Cytoplasmic" evidence="1">
    <location>
        <begin position="383"/>
        <end position="421"/>
    </location>
</feature>
<feature type="transmembrane region" description="Helical" evidence="1">
    <location>
        <begin position="422"/>
        <end position="442"/>
    </location>
</feature>
<feature type="topological domain" description="Lumenal" evidence="1">
    <location>
        <begin position="443"/>
        <end position="449"/>
    </location>
</feature>
<feature type="transmembrane region" description="Helical" evidence="1">
    <location>
        <begin position="450"/>
        <end position="470"/>
    </location>
</feature>
<feature type="topological domain" description="Cytoplasmic" evidence="1">
    <location>
        <begin position="471"/>
        <end position="490"/>
    </location>
</feature>
<comment type="function">
    <text evidence="2">Part of the Ssh1 complex, which probably is the major component of a channel-forming translocon complex that may function exclusively in the cotranslational pathway of protein endoplasmic reticulum (ER) import.</text>
</comment>
<comment type="subunit">
    <text>Component of the heterotrimeric Ssh1 complex, which is composed of SSH1, SBH2 and SSS1.</text>
</comment>
<comment type="interaction">
    <interactant intactId="EBI-18175">
        <id>P38353</id>
    </interactant>
    <interactant intactId="EBI-23662">
        <id>P53337</id>
        <label>ERV29</label>
    </interactant>
    <organismsDiffer>false</organismsDiffer>
    <experiments>3</experiments>
</comment>
<comment type="interaction">
    <interactant intactId="EBI-18175">
        <id>P38353</id>
    </interactant>
    <interactant intactId="EBI-13350">
        <id>P38264</id>
        <label>PHO88</label>
    </interactant>
    <organismsDiffer>false</organismsDiffer>
    <experiments>3</experiments>
</comment>
<comment type="interaction">
    <interactant intactId="EBI-18175">
        <id>P38353</id>
    </interactant>
    <interactant intactId="EBI-16406">
        <id>P35179</id>
        <label>SSS1</label>
    </interactant>
    <organismsDiffer>false</organismsDiffer>
    <experiments>8</experiments>
</comment>
<comment type="subcellular location">
    <subcellularLocation>
        <location>Endoplasmic reticulum membrane</location>
        <topology>Multi-pass membrane protein</topology>
    </subcellularLocation>
</comment>
<comment type="miscellaneous">
    <text evidence="3">Present with 704 molecules/cell in log phase SD medium.</text>
</comment>
<comment type="similarity">
    <text evidence="4">Belongs to the SecY/SEC61-alpha family.</text>
</comment>